<accession>P44787</accession>
<organism>
    <name type="scientific">Haemophilus influenzae (strain ATCC 51907 / DSM 11121 / KW20 / Rd)</name>
    <dbReference type="NCBI Taxonomy" id="71421"/>
    <lineage>
        <taxon>Bacteria</taxon>
        <taxon>Pseudomonadati</taxon>
        <taxon>Pseudomonadota</taxon>
        <taxon>Gammaproteobacteria</taxon>
        <taxon>Pasteurellales</taxon>
        <taxon>Pasteurellaceae</taxon>
        <taxon>Haemophilus</taxon>
    </lineage>
</organism>
<name>FMT_HAEIN</name>
<protein>
    <recommendedName>
        <fullName evidence="1">Methionyl-tRNA formyltransferase</fullName>
        <ecNumber evidence="1">2.1.2.9</ecNumber>
    </recommendedName>
</protein>
<keyword id="KW-0648">Protein biosynthesis</keyword>
<keyword id="KW-1185">Reference proteome</keyword>
<keyword id="KW-0808">Transferase</keyword>
<comment type="function">
    <text evidence="1">Attaches a formyl group to the free amino group of methionyl-tRNA(fMet). The formyl group appears to play a dual role in the initiator identity of N-formylmethionyl-tRNA by promoting its recognition by IF2 and preventing the misappropriation of this tRNA by the elongation apparatus.</text>
</comment>
<comment type="catalytic activity">
    <reaction evidence="1">
        <text>L-methionyl-tRNA(fMet) + (6R)-10-formyltetrahydrofolate = N-formyl-L-methionyl-tRNA(fMet) + (6S)-5,6,7,8-tetrahydrofolate + H(+)</text>
        <dbReference type="Rhea" id="RHEA:24380"/>
        <dbReference type="Rhea" id="RHEA-COMP:9952"/>
        <dbReference type="Rhea" id="RHEA-COMP:9953"/>
        <dbReference type="ChEBI" id="CHEBI:15378"/>
        <dbReference type="ChEBI" id="CHEBI:57453"/>
        <dbReference type="ChEBI" id="CHEBI:78530"/>
        <dbReference type="ChEBI" id="CHEBI:78844"/>
        <dbReference type="ChEBI" id="CHEBI:195366"/>
        <dbReference type="EC" id="2.1.2.9"/>
    </reaction>
</comment>
<comment type="similarity">
    <text evidence="1 2">Belongs to the Fmt family.</text>
</comment>
<feature type="chain" id="PRO_0000082973" description="Methionyl-tRNA formyltransferase">
    <location>
        <begin position="1"/>
        <end position="318"/>
    </location>
</feature>
<feature type="binding site" evidence="1">
    <location>
        <begin position="112"/>
        <end position="115"/>
    </location>
    <ligand>
        <name>(6S)-5,6,7,8-tetrahydrofolate</name>
        <dbReference type="ChEBI" id="CHEBI:57453"/>
    </ligand>
</feature>
<gene>
    <name evidence="1" type="primary">fmt</name>
    <name type="ordered locus">HI_0623</name>
</gene>
<sequence length="318" mass="34789">MKSLNIIFAGTPDFAAQHLQAILNSQHNVIAVYTQPDKPAGRGKKLQASPVKQLAEQNNIPVYQPKSLRKEEAQSELKALNADVMVVVAYGLILPKAVLDAPRLGCLNVHGSILPRWRGAAPIQRSIWAGDVQTGVTIMQMDEGLDTGDMLHKVYCDILPTETSTSLYNKLAELAPSALIDVLDNLENGKFIAEKQDGSQSNYAEKLSKEEAQLNWSLSAMQLERNIRAFNPWPIAYFSTEDKDGNAHTLKVYQAKVLPHQDKPAGTILSADKNGIQIATVDGVLNLLQLQSAGKKPMSAQDLLNGRAEWFTIGKVLA</sequence>
<evidence type="ECO:0000255" key="1">
    <source>
        <dbReference type="HAMAP-Rule" id="MF_00182"/>
    </source>
</evidence>
<evidence type="ECO:0000305" key="2"/>
<proteinExistence type="inferred from homology"/>
<reference key="1">
    <citation type="journal article" date="1995" name="Science">
        <title>Whole-genome random sequencing and assembly of Haemophilus influenzae Rd.</title>
        <authorList>
            <person name="Fleischmann R.D."/>
            <person name="Adams M.D."/>
            <person name="White O."/>
            <person name="Clayton R.A."/>
            <person name="Kirkness E.F."/>
            <person name="Kerlavage A.R."/>
            <person name="Bult C.J."/>
            <person name="Tomb J.-F."/>
            <person name="Dougherty B.A."/>
            <person name="Merrick J.M."/>
            <person name="McKenney K."/>
            <person name="Sutton G.G."/>
            <person name="FitzHugh W."/>
            <person name="Fields C.A."/>
            <person name="Gocayne J.D."/>
            <person name="Scott J.D."/>
            <person name="Shirley R."/>
            <person name="Liu L.-I."/>
            <person name="Glodek A."/>
            <person name="Kelley J.M."/>
            <person name="Weidman J.F."/>
            <person name="Phillips C.A."/>
            <person name="Spriggs T."/>
            <person name="Hedblom E."/>
            <person name="Cotton M.D."/>
            <person name="Utterback T.R."/>
            <person name="Hanna M.C."/>
            <person name="Nguyen D.T."/>
            <person name="Saudek D.M."/>
            <person name="Brandon R.C."/>
            <person name="Fine L.D."/>
            <person name="Fritchman J.L."/>
            <person name="Fuhrmann J.L."/>
            <person name="Geoghagen N.S.M."/>
            <person name="Gnehm C.L."/>
            <person name="McDonald L.A."/>
            <person name="Small K.V."/>
            <person name="Fraser C.M."/>
            <person name="Smith H.O."/>
            <person name="Venter J.C."/>
        </authorList>
    </citation>
    <scope>NUCLEOTIDE SEQUENCE [LARGE SCALE GENOMIC DNA]</scope>
    <source>
        <strain>ATCC 51907 / DSM 11121 / KW20 / Rd</strain>
    </source>
</reference>
<dbReference type="EC" id="2.1.2.9" evidence="1"/>
<dbReference type="EMBL" id="L42023">
    <property type="protein sequence ID" value="AAC22283.1"/>
    <property type="molecule type" value="Genomic_DNA"/>
</dbReference>
<dbReference type="PIR" id="E64082">
    <property type="entry name" value="E64082"/>
</dbReference>
<dbReference type="RefSeq" id="NP_438783.1">
    <property type="nucleotide sequence ID" value="NC_000907.1"/>
</dbReference>
<dbReference type="SMR" id="P44787"/>
<dbReference type="STRING" id="71421.HI_0623"/>
<dbReference type="EnsemblBacteria" id="AAC22283">
    <property type="protein sequence ID" value="AAC22283"/>
    <property type="gene ID" value="HI_0623"/>
</dbReference>
<dbReference type="KEGG" id="hin:HI_0623"/>
<dbReference type="PATRIC" id="fig|71421.8.peg.649"/>
<dbReference type="eggNOG" id="COG0223">
    <property type="taxonomic scope" value="Bacteria"/>
</dbReference>
<dbReference type="HOGENOM" id="CLU_033347_1_2_6"/>
<dbReference type="OrthoDB" id="9802815at2"/>
<dbReference type="PhylomeDB" id="P44787"/>
<dbReference type="BioCyc" id="HINF71421:G1GJ1-650-MONOMER"/>
<dbReference type="Proteomes" id="UP000000579">
    <property type="component" value="Chromosome"/>
</dbReference>
<dbReference type="GO" id="GO:0005829">
    <property type="term" value="C:cytosol"/>
    <property type="evidence" value="ECO:0000318"/>
    <property type="project" value="GO_Central"/>
</dbReference>
<dbReference type="GO" id="GO:0004479">
    <property type="term" value="F:methionyl-tRNA formyltransferase activity"/>
    <property type="evidence" value="ECO:0000318"/>
    <property type="project" value="GO_Central"/>
</dbReference>
<dbReference type="GO" id="GO:0071951">
    <property type="term" value="P:conversion of methionyl-tRNA to N-formyl-methionyl-tRNA"/>
    <property type="evidence" value="ECO:0000318"/>
    <property type="project" value="GO_Central"/>
</dbReference>
<dbReference type="CDD" id="cd08646">
    <property type="entry name" value="FMT_core_Met-tRNA-FMT_N"/>
    <property type="match status" value="1"/>
</dbReference>
<dbReference type="CDD" id="cd08704">
    <property type="entry name" value="Met_tRNA_FMT_C"/>
    <property type="match status" value="1"/>
</dbReference>
<dbReference type="FunFam" id="3.40.50.170:FF:000003">
    <property type="entry name" value="Methionyl-tRNA formyltransferase"/>
    <property type="match status" value="1"/>
</dbReference>
<dbReference type="Gene3D" id="3.10.25.10">
    <property type="entry name" value="Formyl transferase, C-terminal domain"/>
    <property type="match status" value="1"/>
</dbReference>
<dbReference type="Gene3D" id="3.40.50.170">
    <property type="entry name" value="Formyl transferase, N-terminal domain"/>
    <property type="match status" value="1"/>
</dbReference>
<dbReference type="HAMAP" id="MF_00182">
    <property type="entry name" value="Formyl_trans"/>
    <property type="match status" value="1"/>
</dbReference>
<dbReference type="InterPro" id="IPR005794">
    <property type="entry name" value="Fmt"/>
</dbReference>
<dbReference type="InterPro" id="IPR005793">
    <property type="entry name" value="Formyl_trans_C"/>
</dbReference>
<dbReference type="InterPro" id="IPR037022">
    <property type="entry name" value="Formyl_trans_C_sf"/>
</dbReference>
<dbReference type="InterPro" id="IPR002376">
    <property type="entry name" value="Formyl_transf_N"/>
</dbReference>
<dbReference type="InterPro" id="IPR036477">
    <property type="entry name" value="Formyl_transf_N_sf"/>
</dbReference>
<dbReference type="InterPro" id="IPR011034">
    <property type="entry name" value="Formyl_transferase-like_C_sf"/>
</dbReference>
<dbReference type="InterPro" id="IPR001555">
    <property type="entry name" value="GART_AS"/>
</dbReference>
<dbReference type="InterPro" id="IPR044135">
    <property type="entry name" value="Met-tRNA-FMT_C"/>
</dbReference>
<dbReference type="InterPro" id="IPR041711">
    <property type="entry name" value="Met-tRNA-FMT_N"/>
</dbReference>
<dbReference type="NCBIfam" id="TIGR00460">
    <property type="entry name" value="fmt"/>
    <property type="match status" value="1"/>
</dbReference>
<dbReference type="PANTHER" id="PTHR11138">
    <property type="entry name" value="METHIONYL-TRNA FORMYLTRANSFERASE"/>
    <property type="match status" value="1"/>
</dbReference>
<dbReference type="PANTHER" id="PTHR11138:SF5">
    <property type="entry name" value="METHIONYL-TRNA FORMYLTRANSFERASE, MITOCHONDRIAL"/>
    <property type="match status" value="1"/>
</dbReference>
<dbReference type="Pfam" id="PF02911">
    <property type="entry name" value="Formyl_trans_C"/>
    <property type="match status" value="1"/>
</dbReference>
<dbReference type="Pfam" id="PF00551">
    <property type="entry name" value="Formyl_trans_N"/>
    <property type="match status" value="1"/>
</dbReference>
<dbReference type="SUPFAM" id="SSF50486">
    <property type="entry name" value="FMT C-terminal domain-like"/>
    <property type="match status" value="1"/>
</dbReference>
<dbReference type="SUPFAM" id="SSF53328">
    <property type="entry name" value="Formyltransferase"/>
    <property type="match status" value="1"/>
</dbReference>
<dbReference type="PROSITE" id="PS00373">
    <property type="entry name" value="GART"/>
    <property type="match status" value="1"/>
</dbReference>